<dbReference type="EC" id="7.1.1.-" evidence="1"/>
<dbReference type="EMBL" id="AM746676">
    <property type="protein sequence ID" value="CAN94384.1"/>
    <property type="molecule type" value="Genomic_DNA"/>
</dbReference>
<dbReference type="RefSeq" id="WP_012236854.1">
    <property type="nucleotide sequence ID" value="NC_010162.1"/>
</dbReference>
<dbReference type="SMR" id="A9EX69"/>
<dbReference type="STRING" id="448385.sce4221"/>
<dbReference type="KEGG" id="scl:sce4221"/>
<dbReference type="eggNOG" id="COG0713">
    <property type="taxonomic scope" value="Bacteria"/>
</dbReference>
<dbReference type="HOGENOM" id="CLU_144724_0_0_7"/>
<dbReference type="BioCyc" id="SCEL448385:SCE_RS21690-MONOMER"/>
<dbReference type="Proteomes" id="UP000002139">
    <property type="component" value="Chromosome"/>
</dbReference>
<dbReference type="GO" id="GO:0030964">
    <property type="term" value="C:NADH dehydrogenase complex"/>
    <property type="evidence" value="ECO:0007669"/>
    <property type="project" value="TreeGrafter"/>
</dbReference>
<dbReference type="GO" id="GO:0005886">
    <property type="term" value="C:plasma membrane"/>
    <property type="evidence" value="ECO:0007669"/>
    <property type="project" value="UniProtKB-SubCell"/>
</dbReference>
<dbReference type="GO" id="GO:0050136">
    <property type="term" value="F:NADH:ubiquinone reductase (non-electrogenic) activity"/>
    <property type="evidence" value="ECO:0007669"/>
    <property type="project" value="UniProtKB-UniRule"/>
</dbReference>
<dbReference type="GO" id="GO:0048038">
    <property type="term" value="F:quinone binding"/>
    <property type="evidence" value="ECO:0007669"/>
    <property type="project" value="UniProtKB-KW"/>
</dbReference>
<dbReference type="GO" id="GO:0042773">
    <property type="term" value="P:ATP synthesis coupled electron transport"/>
    <property type="evidence" value="ECO:0007669"/>
    <property type="project" value="InterPro"/>
</dbReference>
<dbReference type="FunFam" id="1.10.287.3510:FF:000001">
    <property type="entry name" value="NADH-quinone oxidoreductase subunit K"/>
    <property type="match status" value="1"/>
</dbReference>
<dbReference type="Gene3D" id="1.10.287.3510">
    <property type="match status" value="1"/>
</dbReference>
<dbReference type="HAMAP" id="MF_01456">
    <property type="entry name" value="NDH1_NuoK"/>
    <property type="match status" value="1"/>
</dbReference>
<dbReference type="InterPro" id="IPR001133">
    <property type="entry name" value="NADH_UbQ_OxRdtase_chain4L/K"/>
</dbReference>
<dbReference type="InterPro" id="IPR039428">
    <property type="entry name" value="NUOK/Mnh_C1-like"/>
</dbReference>
<dbReference type="NCBIfam" id="NF004320">
    <property type="entry name" value="PRK05715.1-2"/>
    <property type="match status" value="1"/>
</dbReference>
<dbReference type="NCBIfam" id="NF004321">
    <property type="entry name" value="PRK05715.1-3"/>
    <property type="match status" value="1"/>
</dbReference>
<dbReference type="NCBIfam" id="NF004323">
    <property type="entry name" value="PRK05715.1-5"/>
    <property type="match status" value="1"/>
</dbReference>
<dbReference type="PANTHER" id="PTHR11434:SF16">
    <property type="entry name" value="NADH-UBIQUINONE OXIDOREDUCTASE CHAIN 4L"/>
    <property type="match status" value="1"/>
</dbReference>
<dbReference type="PANTHER" id="PTHR11434">
    <property type="entry name" value="NADH-UBIQUINONE OXIDOREDUCTASE SUBUNIT ND4L"/>
    <property type="match status" value="1"/>
</dbReference>
<dbReference type="Pfam" id="PF00420">
    <property type="entry name" value="Oxidored_q2"/>
    <property type="match status" value="1"/>
</dbReference>
<keyword id="KW-0997">Cell inner membrane</keyword>
<keyword id="KW-1003">Cell membrane</keyword>
<keyword id="KW-0472">Membrane</keyword>
<keyword id="KW-0520">NAD</keyword>
<keyword id="KW-0874">Quinone</keyword>
<keyword id="KW-1185">Reference proteome</keyword>
<keyword id="KW-1278">Translocase</keyword>
<keyword id="KW-0812">Transmembrane</keyword>
<keyword id="KW-1133">Transmembrane helix</keyword>
<keyword id="KW-0813">Transport</keyword>
<keyword id="KW-0830">Ubiquinone</keyword>
<evidence type="ECO:0000255" key="1">
    <source>
        <dbReference type="HAMAP-Rule" id="MF_01456"/>
    </source>
</evidence>
<protein>
    <recommendedName>
        <fullName evidence="1">NADH-quinone oxidoreductase subunit K</fullName>
        <ecNumber evidence="1">7.1.1.-</ecNumber>
    </recommendedName>
    <alternativeName>
        <fullName evidence="1">NADH dehydrogenase I subunit K</fullName>
    </alternativeName>
    <alternativeName>
        <fullName evidence="1">NDH-1 subunit K</fullName>
    </alternativeName>
</protein>
<name>NUOK_SORC5</name>
<gene>
    <name evidence="1" type="primary">nuoK</name>
    <name type="ordered locus">sce4221</name>
</gene>
<reference key="1">
    <citation type="journal article" date="2007" name="Nat. Biotechnol.">
        <title>Complete genome sequence of the myxobacterium Sorangium cellulosum.</title>
        <authorList>
            <person name="Schneiker S."/>
            <person name="Perlova O."/>
            <person name="Kaiser O."/>
            <person name="Gerth K."/>
            <person name="Alici A."/>
            <person name="Altmeyer M.O."/>
            <person name="Bartels D."/>
            <person name="Bekel T."/>
            <person name="Beyer S."/>
            <person name="Bode E."/>
            <person name="Bode H.B."/>
            <person name="Bolten C.J."/>
            <person name="Choudhuri J.V."/>
            <person name="Doss S."/>
            <person name="Elnakady Y.A."/>
            <person name="Frank B."/>
            <person name="Gaigalat L."/>
            <person name="Goesmann A."/>
            <person name="Groeger C."/>
            <person name="Gross F."/>
            <person name="Jelsbak L."/>
            <person name="Jelsbak L."/>
            <person name="Kalinowski J."/>
            <person name="Kegler C."/>
            <person name="Knauber T."/>
            <person name="Konietzny S."/>
            <person name="Kopp M."/>
            <person name="Krause L."/>
            <person name="Krug D."/>
            <person name="Linke B."/>
            <person name="Mahmud T."/>
            <person name="Martinez-Arias R."/>
            <person name="McHardy A.C."/>
            <person name="Merai M."/>
            <person name="Meyer F."/>
            <person name="Mormann S."/>
            <person name="Munoz-Dorado J."/>
            <person name="Perez J."/>
            <person name="Pradella S."/>
            <person name="Rachid S."/>
            <person name="Raddatz G."/>
            <person name="Rosenau F."/>
            <person name="Rueckert C."/>
            <person name="Sasse F."/>
            <person name="Scharfe M."/>
            <person name="Schuster S.C."/>
            <person name="Suen G."/>
            <person name="Treuner-Lange A."/>
            <person name="Velicer G.J."/>
            <person name="Vorholter F.-J."/>
            <person name="Weissman K.J."/>
            <person name="Welch R.D."/>
            <person name="Wenzel S.C."/>
            <person name="Whitworth D.E."/>
            <person name="Wilhelm S."/>
            <person name="Wittmann C."/>
            <person name="Bloecker H."/>
            <person name="Puehler A."/>
            <person name="Mueller R."/>
        </authorList>
    </citation>
    <scope>NUCLEOTIDE SEQUENCE [LARGE SCALE GENOMIC DNA]</scope>
    <source>
        <strain>So ce56</strain>
    </source>
</reference>
<accession>A9EX69</accession>
<sequence length="103" mass="11446">MISVPIEYYLVVAAVLFLIGSIGFLLRRNLLVLLMSIELMLNAVNLTLVAYNRVHPHDHAGQIFTFFVIAIAAAEAAVGLAIVLAFYRIRKTMRSDDADLLRS</sequence>
<comment type="function">
    <text evidence="1">NDH-1 shuttles electrons from NADH, via FMN and iron-sulfur (Fe-S) centers, to quinones in the respiratory chain. The immediate electron acceptor for the enzyme in this species is believed to be ubiquinone. Couples the redox reaction to proton translocation (for every two electrons transferred, four hydrogen ions are translocated across the cytoplasmic membrane), and thus conserves the redox energy in a proton gradient.</text>
</comment>
<comment type="catalytic activity">
    <reaction evidence="1">
        <text>a quinone + NADH + 5 H(+)(in) = a quinol + NAD(+) + 4 H(+)(out)</text>
        <dbReference type="Rhea" id="RHEA:57888"/>
        <dbReference type="ChEBI" id="CHEBI:15378"/>
        <dbReference type="ChEBI" id="CHEBI:24646"/>
        <dbReference type="ChEBI" id="CHEBI:57540"/>
        <dbReference type="ChEBI" id="CHEBI:57945"/>
        <dbReference type="ChEBI" id="CHEBI:132124"/>
    </reaction>
</comment>
<comment type="subunit">
    <text evidence="1">NDH-1 is composed of 14 different subunits. Subunits NuoA, H, J, K, L, M, N constitute the membrane sector of the complex.</text>
</comment>
<comment type="subcellular location">
    <subcellularLocation>
        <location evidence="1">Cell inner membrane</location>
        <topology evidence="1">Multi-pass membrane protein</topology>
    </subcellularLocation>
</comment>
<comment type="similarity">
    <text evidence="1">Belongs to the complex I subunit 4L family.</text>
</comment>
<proteinExistence type="inferred from homology"/>
<feature type="chain" id="PRO_0000390246" description="NADH-quinone oxidoreductase subunit K">
    <location>
        <begin position="1"/>
        <end position="103"/>
    </location>
</feature>
<feature type="transmembrane region" description="Helical" evidence="1">
    <location>
        <begin position="6"/>
        <end position="26"/>
    </location>
</feature>
<feature type="transmembrane region" description="Helical" evidence="1">
    <location>
        <begin position="30"/>
        <end position="50"/>
    </location>
</feature>
<feature type="transmembrane region" description="Helical" evidence="1">
    <location>
        <begin position="66"/>
        <end position="86"/>
    </location>
</feature>
<organism>
    <name type="scientific">Sorangium cellulosum (strain So ce56)</name>
    <name type="common">Polyangium cellulosum (strain So ce56)</name>
    <dbReference type="NCBI Taxonomy" id="448385"/>
    <lineage>
        <taxon>Bacteria</taxon>
        <taxon>Pseudomonadati</taxon>
        <taxon>Myxococcota</taxon>
        <taxon>Polyangia</taxon>
        <taxon>Polyangiales</taxon>
        <taxon>Polyangiaceae</taxon>
        <taxon>Sorangium</taxon>
    </lineage>
</organism>